<sequence length="517" mass="57948">MKRWTNLGFVDTIYEDEDYVDHHSSSLSSSSSSLSLSPKQPINLSSSPSMELESRVHKWSLANNSKPDVFVNVGGTRFHLHKDPLSKSGYLKRHLTGVNELTLSPPLNITAETFSLVAGFCYGAHIELTPSNVVSLRIAVEVLLITEADDGGRVRDSLRNLTESYLRRVVFVNVDYIQIVLRSCLLLLPESETTAFLIGRCVEALMEIGDGDCVNEFLEEAVKLPAGDFNVVADAVQQRFPRHDLLYRIVDAYVKEHDGEMTEEEKVQICNSIDCDKLSPPLLLHAVQNPKMPLRFIVRAMLQEQLNTRHSIMVAAVAASCAAPTGVRHREIATEARDSSVTLGSLLQRDTAARQNCRLRAAMNSTSSRIESLEKELDTMKRFLSKESEKQKSDRNIVESRSRSVMDSARSASFHCVHQPSNVNKTQRGDRGSVSNLSTTYRRRRASPPQAQPQKSIGKRLIMGIKNAFSTSSKQVPKKNAYAVEEIYDGLEDFVWIKDDNDDNISEELHSHYIKNK</sequence>
<feature type="chain" id="PRO_0000409579" description="BTB/POZ domain-containing protein At3g49900">
    <location>
        <begin position="1"/>
        <end position="517"/>
    </location>
</feature>
<feature type="domain" description="BTB" evidence="2">
    <location>
        <begin position="67"/>
        <end position="130"/>
    </location>
</feature>
<feature type="domain" description="NPH3" evidence="3">
    <location>
        <begin position="224"/>
        <end position="307"/>
    </location>
</feature>
<feature type="region of interest" description="Disordered" evidence="4">
    <location>
        <begin position="28"/>
        <end position="49"/>
    </location>
</feature>
<feature type="region of interest" description="Disordered" evidence="4">
    <location>
        <begin position="409"/>
        <end position="456"/>
    </location>
</feature>
<feature type="compositionally biased region" description="Low complexity" evidence="4">
    <location>
        <begin position="28"/>
        <end position="37"/>
    </location>
</feature>
<feature type="compositionally biased region" description="Polar residues" evidence="4">
    <location>
        <begin position="38"/>
        <end position="49"/>
    </location>
</feature>
<name>Y3990_ARATH</name>
<reference key="1">
    <citation type="journal article" date="2000" name="Nature">
        <title>Sequence and analysis of chromosome 3 of the plant Arabidopsis thaliana.</title>
        <authorList>
            <person name="Salanoubat M."/>
            <person name="Lemcke K."/>
            <person name="Rieger M."/>
            <person name="Ansorge W."/>
            <person name="Unseld M."/>
            <person name="Fartmann B."/>
            <person name="Valle G."/>
            <person name="Bloecker H."/>
            <person name="Perez-Alonso M."/>
            <person name="Obermaier B."/>
            <person name="Delseny M."/>
            <person name="Boutry M."/>
            <person name="Grivell L.A."/>
            <person name="Mache R."/>
            <person name="Puigdomenech P."/>
            <person name="De Simone V."/>
            <person name="Choisne N."/>
            <person name="Artiguenave F."/>
            <person name="Robert C."/>
            <person name="Brottier P."/>
            <person name="Wincker P."/>
            <person name="Cattolico L."/>
            <person name="Weissenbach J."/>
            <person name="Saurin W."/>
            <person name="Quetier F."/>
            <person name="Schaefer M."/>
            <person name="Mueller-Auer S."/>
            <person name="Gabel C."/>
            <person name="Fuchs M."/>
            <person name="Benes V."/>
            <person name="Wurmbach E."/>
            <person name="Drzonek H."/>
            <person name="Erfle H."/>
            <person name="Jordan N."/>
            <person name="Bangert S."/>
            <person name="Wiedelmann R."/>
            <person name="Kranz H."/>
            <person name="Voss H."/>
            <person name="Holland R."/>
            <person name="Brandt P."/>
            <person name="Nyakatura G."/>
            <person name="Vezzi A."/>
            <person name="D'Angelo M."/>
            <person name="Pallavicini A."/>
            <person name="Toppo S."/>
            <person name="Simionati B."/>
            <person name="Conrad A."/>
            <person name="Hornischer K."/>
            <person name="Kauer G."/>
            <person name="Loehnert T.-H."/>
            <person name="Nordsiek G."/>
            <person name="Reichelt J."/>
            <person name="Scharfe M."/>
            <person name="Schoen O."/>
            <person name="Bargues M."/>
            <person name="Terol J."/>
            <person name="Climent J."/>
            <person name="Navarro P."/>
            <person name="Collado C."/>
            <person name="Perez-Perez A."/>
            <person name="Ottenwaelder B."/>
            <person name="Duchemin D."/>
            <person name="Cooke R."/>
            <person name="Laudie M."/>
            <person name="Berger-Llauro C."/>
            <person name="Purnelle B."/>
            <person name="Masuy D."/>
            <person name="de Haan M."/>
            <person name="Maarse A.C."/>
            <person name="Alcaraz J.-P."/>
            <person name="Cottet A."/>
            <person name="Casacuberta E."/>
            <person name="Monfort A."/>
            <person name="Argiriou A."/>
            <person name="Flores M."/>
            <person name="Liguori R."/>
            <person name="Vitale D."/>
            <person name="Mannhaupt G."/>
            <person name="Haase D."/>
            <person name="Schoof H."/>
            <person name="Rudd S."/>
            <person name="Zaccaria P."/>
            <person name="Mewes H.-W."/>
            <person name="Mayer K.F.X."/>
            <person name="Kaul S."/>
            <person name="Town C.D."/>
            <person name="Koo H.L."/>
            <person name="Tallon L.J."/>
            <person name="Jenkins J."/>
            <person name="Rooney T."/>
            <person name="Rizzo M."/>
            <person name="Walts A."/>
            <person name="Utterback T."/>
            <person name="Fujii C.Y."/>
            <person name="Shea T.P."/>
            <person name="Creasy T.H."/>
            <person name="Haas B."/>
            <person name="Maiti R."/>
            <person name="Wu D."/>
            <person name="Peterson J."/>
            <person name="Van Aken S."/>
            <person name="Pai G."/>
            <person name="Militscher J."/>
            <person name="Sellers P."/>
            <person name="Gill J.E."/>
            <person name="Feldblyum T.V."/>
            <person name="Preuss D."/>
            <person name="Lin X."/>
            <person name="Nierman W.C."/>
            <person name="Salzberg S.L."/>
            <person name="White O."/>
            <person name="Venter J.C."/>
            <person name="Fraser C.M."/>
            <person name="Kaneko T."/>
            <person name="Nakamura Y."/>
            <person name="Sato S."/>
            <person name="Kato T."/>
            <person name="Asamizu E."/>
            <person name="Sasamoto S."/>
            <person name="Kimura T."/>
            <person name="Idesawa K."/>
            <person name="Kawashima K."/>
            <person name="Kishida Y."/>
            <person name="Kiyokawa C."/>
            <person name="Kohara M."/>
            <person name="Matsumoto M."/>
            <person name="Matsuno A."/>
            <person name="Muraki A."/>
            <person name="Nakayama S."/>
            <person name="Nakazaki N."/>
            <person name="Shinpo S."/>
            <person name="Takeuchi C."/>
            <person name="Wada T."/>
            <person name="Watanabe A."/>
            <person name="Yamada M."/>
            <person name="Yasuda M."/>
            <person name="Tabata S."/>
        </authorList>
    </citation>
    <scope>NUCLEOTIDE SEQUENCE [LARGE SCALE GENOMIC DNA]</scope>
    <source>
        <strain>cv. Columbia</strain>
    </source>
</reference>
<reference key="2">
    <citation type="journal article" date="2017" name="Plant J.">
        <title>Araport11: a complete reannotation of the Arabidopsis thaliana reference genome.</title>
        <authorList>
            <person name="Cheng C.Y."/>
            <person name="Krishnakumar V."/>
            <person name="Chan A.P."/>
            <person name="Thibaud-Nissen F."/>
            <person name="Schobel S."/>
            <person name="Town C.D."/>
        </authorList>
    </citation>
    <scope>GENOME REANNOTATION</scope>
    <source>
        <strain>cv. Columbia</strain>
    </source>
</reference>
<reference key="3">
    <citation type="journal article" date="2005" name="J. Biol. Chem.">
        <title>Cullins 3a and 3b assemble with members of the broad complex/tramtrack/bric-a-brac (BTB) protein family to form essential ubiquitin-protein ligases (E3s) in Arabidopsis.</title>
        <authorList>
            <person name="Gingerich D.J."/>
            <person name="Gagne J.M."/>
            <person name="Salter D.W."/>
            <person name="Hellmann H."/>
            <person name="Estelle M."/>
            <person name="Ma L."/>
            <person name="Vierstra R.D."/>
        </authorList>
    </citation>
    <scope>DOMAIN BTB</scope>
</reference>
<evidence type="ECO:0000250" key="1"/>
<evidence type="ECO:0000255" key="2">
    <source>
        <dbReference type="PROSITE-ProRule" id="PRU00037"/>
    </source>
</evidence>
<evidence type="ECO:0000255" key="3">
    <source>
        <dbReference type="PROSITE-ProRule" id="PRU00982"/>
    </source>
</evidence>
<evidence type="ECO:0000256" key="4">
    <source>
        <dbReference type="SAM" id="MobiDB-lite"/>
    </source>
</evidence>
<evidence type="ECO:0000269" key="5">
    <source>
    </source>
</evidence>
<proteinExistence type="inferred from homology"/>
<gene>
    <name type="ordered locus">At3g49900</name>
    <name type="ORF">T16K5.250</name>
</gene>
<protein>
    <recommendedName>
        <fullName>BTB/POZ domain-containing protein At3g49900</fullName>
    </recommendedName>
</protein>
<keyword id="KW-0025">Alternative splicing</keyword>
<keyword id="KW-1185">Reference proteome</keyword>
<keyword id="KW-0833">Ubl conjugation pathway</keyword>
<accession>Q9M2W8</accession>
<dbReference type="EMBL" id="AL132965">
    <property type="protein sequence ID" value="CAB66928.1"/>
    <property type="molecule type" value="Genomic_DNA"/>
</dbReference>
<dbReference type="EMBL" id="CP002686">
    <property type="protein sequence ID" value="AEE78603.1"/>
    <property type="molecule type" value="Genomic_DNA"/>
</dbReference>
<dbReference type="PIR" id="T46056">
    <property type="entry name" value="T46056"/>
</dbReference>
<dbReference type="RefSeq" id="NP_190559.1">
    <molecule id="Q9M2W8-1"/>
    <property type="nucleotide sequence ID" value="NM_114850.2"/>
</dbReference>
<dbReference type="FunCoup" id="Q9M2W8">
    <property type="interactions" value="396"/>
</dbReference>
<dbReference type="iPTMnet" id="Q9M2W8"/>
<dbReference type="PaxDb" id="3702-AT3G49900.2"/>
<dbReference type="ProteomicsDB" id="242368">
    <molecule id="Q9M2W8-1"/>
</dbReference>
<dbReference type="EnsemblPlants" id="AT3G49900.1">
    <molecule id="Q9M2W8-1"/>
    <property type="protein sequence ID" value="AT3G49900.1"/>
    <property type="gene ID" value="AT3G49900"/>
</dbReference>
<dbReference type="GeneID" id="824152"/>
<dbReference type="Gramene" id="AT3G49900.1">
    <molecule id="Q9M2W8-1"/>
    <property type="protein sequence ID" value="AT3G49900.1"/>
    <property type="gene ID" value="AT3G49900"/>
</dbReference>
<dbReference type="KEGG" id="ath:AT3G49900"/>
<dbReference type="Araport" id="AT3G49900"/>
<dbReference type="TAIR" id="AT3G49900"/>
<dbReference type="eggNOG" id="ENOG502QYIX">
    <property type="taxonomic scope" value="Eukaryota"/>
</dbReference>
<dbReference type="InParanoid" id="Q9M2W8"/>
<dbReference type="OMA" id="CNYIDCS"/>
<dbReference type="OrthoDB" id="407106at2759"/>
<dbReference type="PhylomeDB" id="Q9M2W8"/>
<dbReference type="UniPathway" id="UPA00143"/>
<dbReference type="PRO" id="PR:Q9M2W8"/>
<dbReference type="Proteomes" id="UP000006548">
    <property type="component" value="Chromosome 3"/>
</dbReference>
<dbReference type="ExpressionAtlas" id="Q9M2W8">
    <property type="expression patterns" value="baseline and differential"/>
</dbReference>
<dbReference type="GO" id="GO:0016567">
    <property type="term" value="P:protein ubiquitination"/>
    <property type="evidence" value="ECO:0007669"/>
    <property type="project" value="UniProtKB-UniPathway"/>
</dbReference>
<dbReference type="Gene3D" id="3.30.710.10">
    <property type="entry name" value="Potassium Channel Kv1.1, Chain A"/>
    <property type="match status" value="1"/>
</dbReference>
<dbReference type="InterPro" id="IPR000210">
    <property type="entry name" value="BTB/POZ_dom"/>
</dbReference>
<dbReference type="InterPro" id="IPR043454">
    <property type="entry name" value="NPH3/RPT2-like"/>
</dbReference>
<dbReference type="InterPro" id="IPR027356">
    <property type="entry name" value="NPH3_dom"/>
</dbReference>
<dbReference type="InterPro" id="IPR011333">
    <property type="entry name" value="SKP1/BTB/POZ_sf"/>
</dbReference>
<dbReference type="PANTHER" id="PTHR32370">
    <property type="entry name" value="OS12G0117600 PROTEIN"/>
    <property type="match status" value="1"/>
</dbReference>
<dbReference type="Pfam" id="PF03000">
    <property type="entry name" value="NPH3"/>
    <property type="match status" value="1"/>
</dbReference>
<dbReference type="SUPFAM" id="SSF54695">
    <property type="entry name" value="POZ domain"/>
    <property type="match status" value="1"/>
</dbReference>
<dbReference type="PROSITE" id="PS50097">
    <property type="entry name" value="BTB"/>
    <property type="match status" value="1"/>
</dbReference>
<dbReference type="PROSITE" id="PS51649">
    <property type="entry name" value="NPH3"/>
    <property type="match status" value="1"/>
</dbReference>
<organism>
    <name type="scientific">Arabidopsis thaliana</name>
    <name type="common">Mouse-ear cress</name>
    <dbReference type="NCBI Taxonomy" id="3702"/>
    <lineage>
        <taxon>Eukaryota</taxon>
        <taxon>Viridiplantae</taxon>
        <taxon>Streptophyta</taxon>
        <taxon>Embryophyta</taxon>
        <taxon>Tracheophyta</taxon>
        <taxon>Spermatophyta</taxon>
        <taxon>Magnoliopsida</taxon>
        <taxon>eudicotyledons</taxon>
        <taxon>Gunneridae</taxon>
        <taxon>Pentapetalae</taxon>
        <taxon>rosids</taxon>
        <taxon>malvids</taxon>
        <taxon>Brassicales</taxon>
        <taxon>Brassicaceae</taxon>
        <taxon>Camelineae</taxon>
        <taxon>Arabidopsis</taxon>
    </lineage>
</organism>
<comment type="function">
    <text evidence="1">May act as a substrate-specific adapter of an E3 ubiquitin-protein ligase complex (CUL3-RBX1-BTB) which mediates the ubiquitination and subsequent proteasomal degradation of target proteins.</text>
</comment>
<comment type="pathway">
    <text>Protein modification; protein ubiquitination.</text>
</comment>
<comment type="alternative products">
    <event type="alternative splicing"/>
    <isoform>
        <id>Q9M2W8-1</id>
        <name>1</name>
        <sequence type="displayed"/>
    </isoform>
    <text>A number of isoforms are produced. According to EST sequences.</text>
</comment>
<comment type="domain">
    <text evidence="5">The BTB/POZ domain mediates the interaction with some component of ubiquitin ligase complexes.</text>
</comment>
<comment type="similarity">
    <text evidence="3">Belongs to the NPH3 family.</text>
</comment>